<protein>
    <recommendedName>
        <fullName>Haloalkane dehalogenase 2</fullName>
        <ecNumber>3.8.1.5</ecNumber>
    </recommendedName>
</protein>
<reference key="1">
    <citation type="journal article" date="2003" name="Proc. Natl. Acad. Sci. U.S.A.">
        <title>The complete genome sequence of Mycobacterium bovis.</title>
        <authorList>
            <person name="Garnier T."/>
            <person name="Eiglmeier K."/>
            <person name="Camus J.-C."/>
            <person name="Medina N."/>
            <person name="Mansoor H."/>
            <person name="Pryor M."/>
            <person name="Duthoy S."/>
            <person name="Grondin S."/>
            <person name="Lacroix C."/>
            <person name="Monsempe C."/>
            <person name="Simon S."/>
            <person name="Harris B."/>
            <person name="Atkin R."/>
            <person name="Doggett J."/>
            <person name="Mayes R."/>
            <person name="Keating L."/>
            <person name="Wheeler P.R."/>
            <person name="Parkhill J."/>
            <person name="Barrell B.G."/>
            <person name="Cole S.T."/>
            <person name="Gordon S.V."/>
            <person name="Hewinson R.G."/>
        </authorList>
    </citation>
    <scope>NUCLEOTIDE SEQUENCE [LARGE SCALE GENOMIC DNA]</scope>
    <source>
        <strain>ATCC BAA-935 / AF2122/97</strain>
    </source>
</reference>
<reference key="2">
    <citation type="journal article" date="2017" name="Genome Announc.">
        <title>Updated reference genome sequence and annotation of Mycobacterium bovis AF2122/97.</title>
        <authorList>
            <person name="Malone K.M."/>
            <person name="Farrell D."/>
            <person name="Stuber T.P."/>
            <person name="Schubert O.T."/>
            <person name="Aebersold R."/>
            <person name="Robbe-Austerman S."/>
            <person name="Gordon S.V."/>
        </authorList>
    </citation>
    <scope>NUCLEOTIDE SEQUENCE [LARGE SCALE GENOMIC DNA]</scope>
    <scope>GENOME REANNOTATION</scope>
    <source>
        <strain>ATCC BAA-935 / AF2122/97</strain>
    </source>
</reference>
<feature type="chain" id="PRO_0000216770" description="Haloalkane dehalogenase 2">
    <location>
        <begin position="1"/>
        <end position="286"/>
    </location>
</feature>
<feature type="domain" description="AB hydrolase-1" evidence="2">
    <location>
        <begin position="35"/>
        <end position="134"/>
    </location>
</feature>
<feature type="active site" description="Nucleophile" evidence="1">
    <location>
        <position position="109"/>
    </location>
</feature>
<feature type="active site" description="Proton donor" evidence="1">
    <location>
        <position position="238"/>
    </location>
</feature>
<feature type="active site" description="Proton acceptor" evidence="1">
    <location>
        <position position="267"/>
    </location>
</feature>
<proteinExistence type="inferred from homology"/>
<gene>
    <name type="primary">dhmA2</name>
    <name type="ordered locus">BQ2027_MB1864C</name>
</gene>
<sequence>MSIDFTPDPQLYPFESRWFDSSRGRIHYVDEGTGPPILLCHGNPTWSFLYRDIIVALRDRFRCVAPDYLGFGLSERPSGFGYQIDEHARVIGEFVDHLGLDRYLSMGQDWGGPISMAVAVERADRVRGVVLGNTWFWPADTLAMKAFSRVMSSPPVQYAILRRNFFVERLIPAGTEHRPSSAVMAHYRAVQPNAAARRGVAEMPKQILAARPLLARLAREVPATLGTKPTLLIWGMKDVAFRPKTIIPRLSATFPDHVLVELPNAKHFIQEDAPDRIAAAIIERFG</sequence>
<dbReference type="EC" id="3.8.1.5"/>
<dbReference type="EMBL" id="LT708304">
    <property type="protein sequence ID" value="SIU00468.1"/>
    <property type="molecule type" value="Genomic_DNA"/>
</dbReference>
<dbReference type="RefSeq" id="NP_855516.1">
    <property type="nucleotide sequence ID" value="NC_002945.3"/>
</dbReference>
<dbReference type="RefSeq" id="WP_003409254.1">
    <property type="nucleotide sequence ID" value="NC_002945.4"/>
</dbReference>
<dbReference type="SMR" id="P64304"/>
<dbReference type="ESTHER" id="myctu-Rv1833c">
    <property type="family name" value="Haloalkane_dehalogenase-HLD1"/>
</dbReference>
<dbReference type="KEGG" id="mbo:BQ2027_MB1864C"/>
<dbReference type="PATRIC" id="fig|233413.5.peg.2044"/>
<dbReference type="Proteomes" id="UP000001419">
    <property type="component" value="Chromosome"/>
</dbReference>
<dbReference type="GO" id="GO:0004301">
    <property type="term" value="F:epoxide hydrolase activity"/>
    <property type="evidence" value="ECO:0007669"/>
    <property type="project" value="TreeGrafter"/>
</dbReference>
<dbReference type="GO" id="GO:0018786">
    <property type="term" value="F:haloalkane dehalogenase activity"/>
    <property type="evidence" value="ECO:0007669"/>
    <property type="project" value="UniProtKB-UniRule"/>
</dbReference>
<dbReference type="Gene3D" id="3.40.50.1820">
    <property type="entry name" value="alpha/beta hydrolase"/>
    <property type="match status" value="1"/>
</dbReference>
<dbReference type="HAMAP" id="MF_01230">
    <property type="entry name" value="Haloalk_dehal_type1"/>
    <property type="match status" value="1"/>
</dbReference>
<dbReference type="InterPro" id="IPR000073">
    <property type="entry name" value="AB_hydrolase_1"/>
</dbReference>
<dbReference type="InterPro" id="IPR029058">
    <property type="entry name" value="AB_hydrolase_fold"/>
</dbReference>
<dbReference type="InterPro" id="IPR000639">
    <property type="entry name" value="Epox_hydrolase-like"/>
</dbReference>
<dbReference type="InterPro" id="IPR051340">
    <property type="entry name" value="Haloalkane_dehalogenase"/>
</dbReference>
<dbReference type="InterPro" id="IPR023489">
    <property type="entry name" value="Haloalkane_dehalogenase_1"/>
</dbReference>
<dbReference type="NCBIfam" id="NF002873">
    <property type="entry name" value="PRK03204.1"/>
    <property type="match status" value="1"/>
</dbReference>
<dbReference type="PANTHER" id="PTHR42977:SF3">
    <property type="entry name" value="AB HYDROLASE-1 DOMAIN-CONTAINING PROTEIN"/>
    <property type="match status" value="1"/>
</dbReference>
<dbReference type="PANTHER" id="PTHR42977">
    <property type="entry name" value="HYDROLASE-RELATED"/>
    <property type="match status" value="1"/>
</dbReference>
<dbReference type="Pfam" id="PF00561">
    <property type="entry name" value="Abhydrolase_1"/>
    <property type="match status" value="1"/>
</dbReference>
<dbReference type="PRINTS" id="PR00111">
    <property type="entry name" value="ABHYDROLASE"/>
</dbReference>
<dbReference type="PRINTS" id="PR00412">
    <property type="entry name" value="EPOXHYDRLASE"/>
</dbReference>
<dbReference type="SUPFAM" id="SSF53474">
    <property type="entry name" value="alpha/beta-Hydrolases"/>
    <property type="match status" value="1"/>
</dbReference>
<name>DHMA2_MYCBO</name>
<organism>
    <name type="scientific">Mycobacterium bovis (strain ATCC BAA-935 / AF2122/97)</name>
    <dbReference type="NCBI Taxonomy" id="233413"/>
    <lineage>
        <taxon>Bacteria</taxon>
        <taxon>Bacillati</taxon>
        <taxon>Actinomycetota</taxon>
        <taxon>Actinomycetes</taxon>
        <taxon>Mycobacteriales</taxon>
        <taxon>Mycobacteriaceae</taxon>
        <taxon>Mycobacterium</taxon>
        <taxon>Mycobacterium tuberculosis complex</taxon>
    </lineage>
</organism>
<evidence type="ECO:0000250" key="1"/>
<evidence type="ECO:0000255" key="2"/>
<evidence type="ECO:0000305" key="3"/>
<keyword id="KW-0378">Hydrolase</keyword>
<keyword id="KW-1185">Reference proteome</keyword>
<comment type="function">
    <text evidence="1">Catalyzes hydrolytic cleavage of carbon-halogen bonds in halogenated aliphatic compounds, leading to the formation of the corresponding primary alcohols, halide ions and protons.</text>
</comment>
<comment type="catalytic activity">
    <reaction>
        <text>1-haloalkane + H2O = a halide anion + a primary alcohol + H(+)</text>
        <dbReference type="Rhea" id="RHEA:19081"/>
        <dbReference type="ChEBI" id="CHEBI:15377"/>
        <dbReference type="ChEBI" id="CHEBI:15378"/>
        <dbReference type="ChEBI" id="CHEBI:15734"/>
        <dbReference type="ChEBI" id="CHEBI:16042"/>
        <dbReference type="ChEBI" id="CHEBI:18060"/>
        <dbReference type="EC" id="3.8.1.5"/>
    </reaction>
</comment>
<comment type="subunit">
    <text evidence="1">Monomer.</text>
</comment>
<comment type="similarity">
    <text evidence="3">Belongs to the haloalkane dehalogenase family. Type 1 subfamily.</text>
</comment>
<accession>P64304</accession>
<accession>A0A1R3XZG3</accession>
<accession>Q50600</accession>
<accession>X2BJ69</accession>